<evidence type="ECO:0000250" key="1">
    <source>
        <dbReference type="UniProtKB" id="P0ACE7"/>
    </source>
</evidence>
<evidence type="ECO:0000255" key="2">
    <source>
        <dbReference type="PROSITE-ProRule" id="PRU00464"/>
    </source>
</evidence>
<evidence type="ECO:0000305" key="3"/>
<name>HINT_ECO57</name>
<proteinExistence type="inferred from homology"/>
<reference key="1">
    <citation type="journal article" date="2001" name="Nature">
        <title>Genome sequence of enterohaemorrhagic Escherichia coli O157:H7.</title>
        <authorList>
            <person name="Perna N.T."/>
            <person name="Plunkett G. III"/>
            <person name="Burland V."/>
            <person name="Mau B."/>
            <person name="Glasner J.D."/>
            <person name="Rose D.J."/>
            <person name="Mayhew G.F."/>
            <person name="Evans P.S."/>
            <person name="Gregor J."/>
            <person name="Kirkpatrick H.A."/>
            <person name="Posfai G."/>
            <person name="Hackett J."/>
            <person name="Klink S."/>
            <person name="Boutin A."/>
            <person name="Shao Y."/>
            <person name="Miller L."/>
            <person name="Grotbeck E.J."/>
            <person name="Davis N.W."/>
            <person name="Lim A."/>
            <person name="Dimalanta E.T."/>
            <person name="Potamousis K."/>
            <person name="Apodaca J."/>
            <person name="Anantharaman T.S."/>
            <person name="Lin J."/>
            <person name="Yen G."/>
            <person name="Schwartz D.C."/>
            <person name="Welch R.A."/>
            <person name="Blattner F.R."/>
        </authorList>
    </citation>
    <scope>NUCLEOTIDE SEQUENCE [LARGE SCALE GENOMIC DNA]</scope>
    <source>
        <strain>O157:H7 / EDL933 / ATCC 700927 / EHEC</strain>
    </source>
</reference>
<reference key="2">
    <citation type="journal article" date="2001" name="DNA Res.">
        <title>Complete genome sequence of enterohemorrhagic Escherichia coli O157:H7 and genomic comparison with a laboratory strain K-12.</title>
        <authorList>
            <person name="Hayashi T."/>
            <person name="Makino K."/>
            <person name="Ohnishi M."/>
            <person name="Kurokawa K."/>
            <person name="Ishii K."/>
            <person name="Yokoyama K."/>
            <person name="Han C.-G."/>
            <person name="Ohtsubo E."/>
            <person name="Nakayama K."/>
            <person name="Murata T."/>
            <person name="Tanaka M."/>
            <person name="Tobe T."/>
            <person name="Iida T."/>
            <person name="Takami H."/>
            <person name="Honda T."/>
            <person name="Sasakawa C."/>
            <person name="Ogasawara N."/>
            <person name="Yasunaga T."/>
            <person name="Kuhara S."/>
            <person name="Shiba T."/>
            <person name="Hattori M."/>
            <person name="Shinagawa H."/>
        </authorList>
    </citation>
    <scope>NUCLEOTIDE SEQUENCE [LARGE SCALE GENOMIC DNA]</scope>
    <source>
        <strain>O157:H7 / Sakai / RIMD 0509952 / EHEC</strain>
    </source>
</reference>
<accession>P0ACE8</accession>
<accession>P36950</accession>
<accession>P75945</accession>
<keyword id="KW-0378">Hydrolase</keyword>
<keyword id="KW-0547">Nucleotide-binding</keyword>
<keyword id="KW-1185">Reference proteome</keyword>
<organism>
    <name type="scientific">Escherichia coli O157:H7</name>
    <dbReference type="NCBI Taxonomy" id="83334"/>
    <lineage>
        <taxon>Bacteria</taxon>
        <taxon>Pseudomonadati</taxon>
        <taxon>Pseudomonadota</taxon>
        <taxon>Gammaproteobacteria</taxon>
        <taxon>Enterobacterales</taxon>
        <taxon>Enterobacteriaceae</taxon>
        <taxon>Escherichia</taxon>
    </lineage>
</organism>
<protein>
    <recommendedName>
        <fullName evidence="1">Purine nucleoside phosphoramidase</fullName>
        <ecNumber evidence="1">3.9.1.-</ecNumber>
    </recommendedName>
    <alternativeName>
        <fullName>Histidine triad nucleotide binding protein HinT</fullName>
        <shortName>HIT protein</shortName>
    </alternativeName>
</protein>
<comment type="function">
    <text evidence="1">Hydrolyzes purine nucleotide phosphoramidates, including adenosine 5'monophosphoramidate (AMP-NH2), adenosine 5'monophosphomorpholidate (AMP-morpholidate), guanosine 5'monophosphomorpholidate (GMP-morpholidate) and tryptamine 5'guanosine monophosphate (TpGd). Hydrolyzes lysyl-AMP (AMP-N-epsilon-(N-alpha-acetyl lysine methyl ester)) generated by lysine tRNA ligase and lysyl-GMP (GMP-N-epsilon-(N-alpha-acetyl lysine methyl ester)). Is essential for the activity of the enzyme D-alanine dehydrogenase (DadA).</text>
</comment>
<comment type="subunit">
    <text evidence="1">Homodimer.</text>
</comment>
<comment type="similarity">
    <text evidence="3">Belongs to the HINT family.</text>
</comment>
<gene>
    <name type="primary">hinT</name>
    <name type="ordered locus">Z1742</name>
    <name type="ordered locus">ECs1481</name>
</gene>
<feature type="chain" id="PRO_0000109831" description="Purine nucleoside phosphoramidase">
    <location>
        <begin position="1"/>
        <end position="119"/>
    </location>
</feature>
<feature type="domain" description="HIT" evidence="2">
    <location>
        <begin position="6"/>
        <end position="115"/>
    </location>
</feature>
<feature type="short sequence motif" description="Histidine triad motif" evidence="1">
    <location>
        <begin position="99"/>
        <end position="105"/>
    </location>
</feature>
<feature type="active site" description="Tele-AMP-histidine intermediate" evidence="1">
    <location>
        <position position="101"/>
    </location>
</feature>
<feature type="binding site" evidence="1">
    <location>
        <begin position="30"/>
        <end position="32"/>
    </location>
    <ligand>
        <name>GMP</name>
        <dbReference type="ChEBI" id="CHEBI:58115"/>
    </ligand>
</feature>
<feature type="binding site" evidence="1">
    <location>
        <position position="88"/>
    </location>
    <ligand>
        <name>GMP</name>
        <dbReference type="ChEBI" id="CHEBI:58115"/>
    </ligand>
</feature>
<feature type="binding site" evidence="1">
    <location>
        <begin position="96"/>
        <end position="97"/>
    </location>
    <ligand>
        <name>GMP</name>
        <dbReference type="ChEBI" id="CHEBI:58115"/>
    </ligand>
</feature>
<feature type="binding site" evidence="1">
    <location>
        <begin position="101"/>
        <end position="103"/>
    </location>
    <ligand>
        <name>GMP</name>
        <dbReference type="ChEBI" id="CHEBI:58115"/>
    </ligand>
</feature>
<dbReference type="EC" id="3.9.1.-" evidence="1"/>
<dbReference type="EMBL" id="AE005174">
    <property type="protein sequence ID" value="AAG55849.1"/>
    <property type="molecule type" value="Genomic_DNA"/>
</dbReference>
<dbReference type="EMBL" id="BA000007">
    <property type="protein sequence ID" value="BAB34904.1"/>
    <property type="molecule type" value="Genomic_DNA"/>
</dbReference>
<dbReference type="PIR" id="A99814">
    <property type="entry name" value="A99814"/>
</dbReference>
<dbReference type="PIR" id="E85673">
    <property type="entry name" value="E85673"/>
</dbReference>
<dbReference type="RefSeq" id="NP_309508.2">
    <property type="nucleotide sequence ID" value="NC_002695.1"/>
</dbReference>
<dbReference type="RefSeq" id="WP_000807125.1">
    <property type="nucleotide sequence ID" value="NZ_VOAI01000018.1"/>
</dbReference>
<dbReference type="SMR" id="P0ACE8"/>
<dbReference type="STRING" id="155864.Z1742"/>
<dbReference type="GeneID" id="912424"/>
<dbReference type="GeneID" id="93776305"/>
<dbReference type="KEGG" id="ece:Z1742"/>
<dbReference type="KEGG" id="ecs:ECs_1481"/>
<dbReference type="PATRIC" id="fig|386585.9.peg.1582"/>
<dbReference type="eggNOG" id="COG0537">
    <property type="taxonomic scope" value="Bacteria"/>
</dbReference>
<dbReference type="HOGENOM" id="CLU_056776_8_1_6"/>
<dbReference type="OMA" id="YRVVMNC"/>
<dbReference type="Proteomes" id="UP000000558">
    <property type="component" value="Chromosome"/>
</dbReference>
<dbReference type="Proteomes" id="UP000002519">
    <property type="component" value="Chromosome"/>
</dbReference>
<dbReference type="GO" id="GO:0016787">
    <property type="term" value="F:hydrolase activity"/>
    <property type="evidence" value="ECO:0007669"/>
    <property type="project" value="UniProtKB-KW"/>
</dbReference>
<dbReference type="GO" id="GO:0000166">
    <property type="term" value="F:nucleotide binding"/>
    <property type="evidence" value="ECO:0007669"/>
    <property type="project" value="UniProtKB-KW"/>
</dbReference>
<dbReference type="CDD" id="cd01276">
    <property type="entry name" value="PKCI_related"/>
    <property type="match status" value="1"/>
</dbReference>
<dbReference type="FunFam" id="3.30.428.10:FF:000003">
    <property type="entry name" value="Purine nucleoside phosphoramidase"/>
    <property type="match status" value="1"/>
</dbReference>
<dbReference type="Gene3D" id="3.30.428.10">
    <property type="entry name" value="HIT-like"/>
    <property type="match status" value="1"/>
</dbReference>
<dbReference type="InterPro" id="IPR019808">
    <property type="entry name" value="Histidine_triad_CS"/>
</dbReference>
<dbReference type="InterPro" id="IPR001310">
    <property type="entry name" value="Histidine_triad_HIT"/>
</dbReference>
<dbReference type="InterPro" id="IPR011146">
    <property type="entry name" value="HIT-like"/>
</dbReference>
<dbReference type="InterPro" id="IPR036265">
    <property type="entry name" value="HIT-like_sf"/>
</dbReference>
<dbReference type="NCBIfam" id="NF007965">
    <property type="entry name" value="PRK10687.1"/>
    <property type="match status" value="1"/>
</dbReference>
<dbReference type="PANTHER" id="PTHR23089">
    <property type="entry name" value="HISTIDINE TRIAD HIT PROTEIN"/>
    <property type="match status" value="1"/>
</dbReference>
<dbReference type="Pfam" id="PF01230">
    <property type="entry name" value="HIT"/>
    <property type="match status" value="1"/>
</dbReference>
<dbReference type="PRINTS" id="PR00332">
    <property type="entry name" value="HISTRIAD"/>
</dbReference>
<dbReference type="SUPFAM" id="SSF54197">
    <property type="entry name" value="HIT-like"/>
    <property type="match status" value="1"/>
</dbReference>
<dbReference type="PROSITE" id="PS00892">
    <property type="entry name" value="HIT_1"/>
    <property type="match status" value="1"/>
</dbReference>
<dbReference type="PROSITE" id="PS51084">
    <property type="entry name" value="HIT_2"/>
    <property type="match status" value="1"/>
</dbReference>
<sequence>MAEETIFSKIIRREIPSDIVYQDDLVTAFRDISPQAPTHILIIPNILIPTVNDVSAEHEQALGRMITVAAKIAEQEGIAEDGYRLIMNTNRHGGQEVYHIHMHLLGGRPLGPMLAHKGL</sequence>